<feature type="chain" id="PRO_0000290441" description="1-(5-phosphoribosyl)-5-[(5-phosphoribosylamino)methylideneamino] imidazole-4-carboxamide isomerase">
    <location>
        <begin position="1"/>
        <end position="248"/>
    </location>
</feature>
<feature type="active site" description="Proton acceptor" evidence="1">
    <location>
        <position position="8"/>
    </location>
</feature>
<feature type="active site" description="Proton donor" evidence="1">
    <location>
        <position position="131"/>
    </location>
</feature>
<gene>
    <name evidence="1" type="primary">hisA</name>
    <name type="ordered locus">Aave_1034</name>
</gene>
<sequence>MLLIPAIDLKDGHCVRLKQGDMDQSTTFGEDPAAMARKWVDAGARRLHLVDLNGAFAGAPKNHAAIKAILKEVGDDLPVQLGGGIRDLDTIEKYIDGGLRYVIIGTAAVKNPGFLKDACSAFGGHIIVGLDAKDGKVATDGWSKLTGHEVVDLAKRFEDWGVESIVYTDIGRDGMLSGINIEATVKLAQALTIPVIASGGLAGMADIEQLCAVESEGVEGVICGRAIYSGDLDFAAAQARADELNGAA</sequence>
<comment type="catalytic activity">
    <reaction evidence="1">
        <text>1-(5-phospho-beta-D-ribosyl)-5-[(5-phospho-beta-D-ribosylamino)methylideneamino]imidazole-4-carboxamide = 5-[(5-phospho-1-deoxy-D-ribulos-1-ylimino)methylamino]-1-(5-phospho-beta-D-ribosyl)imidazole-4-carboxamide</text>
        <dbReference type="Rhea" id="RHEA:15469"/>
        <dbReference type="ChEBI" id="CHEBI:58435"/>
        <dbReference type="ChEBI" id="CHEBI:58525"/>
        <dbReference type="EC" id="5.3.1.16"/>
    </reaction>
</comment>
<comment type="pathway">
    <text evidence="1">Amino-acid biosynthesis; L-histidine biosynthesis; L-histidine from 5-phospho-alpha-D-ribose 1-diphosphate: step 4/9.</text>
</comment>
<comment type="subcellular location">
    <subcellularLocation>
        <location evidence="1">Cytoplasm</location>
    </subcellularLocation>
</comment>
<comment type="similarity">
    <text evidence="1">Belongs to the HisA/HisF family.</text>
</comment>
<protein>
    <recommendedName>
        <fullName evidence="1">1-(5-phosphoribosyl)-5-[(5-phosphoribosylamino)methylideneamino] imidazole-4-carboxamide isomerase</fullName>
        <ecNumber evidence="1">5.3.1.16</ecNumber>
    </recommendedName>
    <alternativeName>
        <fullName evidence="1">Phosphoribosylformimino-5-aminoimidazole carboxamide ribotide isomerase</fullName>
    </alternativeName>
</protein>
<proteinExistence type="inferred from homology"/>
<reference key="1">
    <citation type="submission" date="2006-12" db="EMBL/GenBank/DDBJ databases">
        <title>Complete sequence of Acidovorax avenae subsp. citrulli AAC00-1.</title>
        <authorList>
            <person name="Copeland A."/>
            <person name="Lucas S."/>
            <person name="Lapidus A."/>
            <person name="Barry K."/>
            <person name="Detter J.C."/>
            <person name="Glavina del Rio T."/>
            <person name="Dalin E."/>
            <person name="Tice H."/>
            <person name="Pitluck S."/>
            <person name="Kiss H."/>
            <person name="Brettin T."/>
            <person name="Bruce D."/>
            <person name="Han C."/>
            <person name="Tapia R."/>
            <person name="Gilna P."/>
            <person name="Schmutz J."/>
            <person name="Larimer F."/>
            <person name="Land M."/>
            <person name="Hauser L."/>
            <person name="Kyrpides N."/>
            <person name="Kim E."/>
            <person name="Stahl D."/>
            <person name="Richardson P."/>
        </authorList>
    </citation>
    <scope>NUCLEOTIDE SEQUENCE [LARGE SCALE GENOMIC DNA]</scope>
    <source>
        <strain>AAC00-1</strain>
    </source>
</reference>
<name>HIS4_PARC0</name>
<keyword id="KW-0028">Amino-acid biosynthesis</keyword>
<keyword id="KW-0963">Cytoplasm</keyword>
<keyword id="KW-0368">Histidine biosynthesis</keyword>
<keyword id="KW-0413">Isomerase</keyword>
<dbReference type="EC" id="5.3.1.16" evidence="1"/>
<dbReference type="EMBL" id="CP000512">
    <property type="protein sequence ID" value="ABM31631.1"/>
    <property type="molecule type" value="Genomic_DNA"/>
</dbReference>
<dbReference type="RefSeq" id="WP_011794189.1">
    <property type="nucleotide sequence ID" value="NC_008752.1"/>
</dbReference>
<dbReference type="SMR" id="A1TKZ3"/>
<dbReference type="STRING" id="397945.Aave_1034"/>
<dbReference type="GeneID" id="79790689"/>
<dbReference type="KEGG" id="aav:Aave_1034"/>
<dbReference type="eggNOG" id="COG0106">
    <property type="taxonomic scope" value="Bacteria"/>
</dbReference>
<dbReference type="HOGENOM" id="CLU_048577_1_1_4"/>
<dbReference type="OrthoDB" id="9807749at2"/>
<dbReference type="UniPathway" id="UPA00031">
    <property type="reaction ID" value="UER00009"/>
</dbReference>
<dbReference type="Proteomes" id="UP000002596">
    <property type="component" value="Chromosome"/>
</dbReference>
<dbReference type="GO" id="GO:0005737">
    <property type="term" value="C:cytoplasm"/>
    <property type="evidence" value="ECO:0007669"/>
    <property type="project" value="UniProtKB-SubCell"/>
</dbReference>
<dbReference type="GO" id="GO:0003949">
    <property type="term" value="F:1-(5-phosphoribosyl)-5-[(5-phosphoribosylamino)methylideneamino]imidazole-4-carboxamide isomerase activity"/>
    <property type="evidence" value="ECO:0007669"/>
    <property type="project" value="UniProtKB-UniRule"/>
</dbReference>
<dbReference type="GO" id="GO:0000105">
    <property type="term" value="P:L-histidine biosynthetic process"/>
    <property type="evidence" value="ECO:0007669"/>
    <property type="project" value="UniProtKB-UniRule"/>
</dbReference>
<dbReference type="GO" id="GO:0000162">
    <property type="term" value="P:L-tryptophan biosynthetic process"/>
    <property type="evidence" value="ECO:0007669"/>
    <property type="project" value="TreeGrafter"/>
</dbReference>
<dbReference type="CDD" id="cd04732">
    <property type="entry name" value="HisA"/>
    <property type="match status" value="1"/>
</dbReference>
<dbReference type="FunFam" id="3.20.20.70:FF:000009">
    <property type="entry name" value="1-(5-phosphoribosyl)-5-[(5-phosphoribosylamino)methylideneamino] imidazole-4-carboxamide isomerase"/>
    <property type="match status" value="1"/>
</dbReference>
<dbReference type="Gene3D" id="3.20.20.70">
    <property type="entry name" value="Aldolase class I"/>
    <property type="match status" value="1"/>
</dbReference>
<dbReference type="HAMAP" id="MF_01014">
    <property type="entry name" value="HisA"/>
    <property type="match status" value="1"/>
</dbReference>
<dbReference type="InterPro" id="IPR013785">
    <property type="entry name" value="Aldolase_TIM"/>
</dbReference>
<dbReference type="InterPro" id="IPR006062">
    <property type="entry name" value="His_biosynth"/>
</dbReference>
<dbReference type="InterPro" id="IPR006063">
    <property type="entry name" value="HisA_bact_arch"/>
</dbReference>
<dbReference type="InterPro" id="IPR044524">
    <property type="entry name" value="Isoase_HisA-like"/>
</dbReference>
<dbReference type="InterPro" id="IPR023016">
    <property type="entry name" value="Isoase_HisA-like_bact"/>
</dbReference>
<dbReference type="InterPro" id="IPR011060">
    <property type="entry name" value="RibuloseP-bd_barrel"/>
</dbReference>
<dbReference type="NCBIfam" id="TIGR00007">
    <property type="entry name" value="1-(5-phosphoribosyl)-5-[(5-phosphoribosylamino)methylideneamino]imidazole-4-carboxamide isomerase"/>
    <property type="match status" value="1"/>
</dbReference>
<dbReference type="NCBIfam" id="NF010112">
    <property type="entry name" value="PRK13585.1"/>
    <property type="match status" value="1"/>
</dbReference>
<dbReference type="PANTHER" id="PTHR43090">
    <property type="entry name" value="1-(5-PHOSPHORIBOSYL)-5-[(5-PHOSPHORIBOSYLAMINO)METHYLIDENEAMINO] IMIDAZOLE-4-CARBOXAMIDE ISOMERASE"/>
    <property type="match status" value="1"/>
</dbReference>
<dbReference type="PANTHER" id="PTHR43090:SF2">
    <property type="entry name" value="1-(5-PHOSPHORIBOSYL)-5-[(5-PHOSPHORIBOSYLAMINO)METHYLIDENEAMINO] IMIDAZOLE-4-CARBOXAMIDE ISOMERASE"/>
    <property type="match status" value="1"/>
</dbReference>
<dbReference type="Pfam" id="PF00977">
    <property type="entry name" value="His_biosynth"/>
    <property type="match status" value="1"/>
</dbReference>
<dbReference type="SUPFAM" id="SSF51366">
    <property type="entry name" value="Ribulose-phoshate binding barrel"/>
    <property type="match status" value="1"/>
</dbReference>
<accession>A1TKZ3</accession>
<evidence type="ECO:0000255" key="1">
    <source>
        <dbReference type="HAMAP-Rule" id="MF_01014"/>
    </source>
</evidence>
<organism>
    <name type="scientific">Paracidovorax citrulli (strain AAC00-1)</name>
    <name type="common">Acidovorax citrulli</name>
    <dbReference type="NCBI Taxonomy" id="397945"/>
    <lineage>
        <taxon>Bacteria</taxon>
        <taxon>Pseudomonadati</taxon>
        <taxon>Pseudomonadota</taxon>
        <taxon>Betaproteobacteria</taxon>
        <taxon>Burkholderiales</taxon>
        <taxon>Comamonadaceae</taxon>
        <taxon>Paracidovorax</taxon>
    </lineage>
</organism>